<sequence length="292" mass="31919">MFHGSMVALVTPMHPDGALDWEGLRRLVDFHIENGTDAIVTVGTTGESPTLEVKEHIRVIREVVDQAQGRLPVIAGTGANSTREAEELTRAALEAGADACLLVVPYYNRPTQEGLYLHFKAIAEAVPIPQILYNVPTRTACDLLPETVARLADISNIVGIKEATEDIARGRQILELCGDKLDLYSGEDSAAMEYMLIGGRGTISVTANVAPKAVHEMCTVALQGNRKAAEAINTRLCPLYAALFSEVNPIPVKWALYEMGLIAQGIRLPLTVLSERYHELLRQALRQEQILQ</sequence>
<organism>
    <name type="scientific">Nitrosococcus oceani (strain ATCC 19707 / BCRC 17464 / JCM 30415 / NCIMB 11848 / C-107)</name>
    <dbReference type="NCBI Taxonomy" id="323261"/>
    <lineage>
        <taxon>Bacteria</taxon>
        <taxon>Pseudomonadati</taxon>
        <taxon>Pseudomonadota</taxon>
        <taxon>Gammaproteobacteria</taxon>
        <taxon>Chromatiales</taxon>
        <taxon>Chromatiaceae</taxon>
        <taxon>Nitrosococcus</taxon>
    </lineage>
</organism>
<dbReference type="EC" id="4.3.3.7" evidence="1"/>
<dbReference type="EMBL" id="CP000127">
    <property type="protein sequence ID" value="ABA58977.1"/>
    <property type="molecule type" value="Genomic_DNA"/>
</dbReference>
<dbReference type="RefSeq" id="WP_004164032.1">
    <property type="nucleotide sequence ID" value="NC_007484.1"/>
</dbReference>
<dbReference type="SMR" id="Q3J869"/>
<dbReference type="FunCoup" id="Q3J869">
    <property type="interactions" value="524"/>
</dbReference>
<dbReference type="STRING" id="323261.Noc_2524"/>
<dbReference type="KEGG" id="noc:Noc_2524"/>
<dbReference type="eggNOG" id="COG0329">
    <property type="taxonomic scope" value="Bacteria"/>
</dbReference>
<dbReference type="HOGENOM" id="CLU_049343_7_1_6"/>
<dbReference type="InParanoid" id="Q3J869"/>
<dbReference type="UniPathway" id="UPA00034">
    <property type="reaction ID" value="UER00017"/>
</dbReference>
<dbReference type="Proteomes" id="UP000006838">
    <property type="component" value="Chromosome"/>
</dbReference>
<dbReference type="GO" id="GO:0005829">
    <property type="term" value="C:cytosol"/>
    <property type="evidence" value="ECO:0007669"/>
    <property type="project" value="TreeGrafter"/>
</dbReference>
<dbReference type="GO" id="GO:0008840">
    <property type="term" value="F:4-hydroxy-tetrahydrodipicolinate synthase activity"/>
    <property type="evidence" value="ECO:0007669"/>
    <property type="project" value="UniProtKB-UniRule"/>
</dbReference>
<dbReference type="GO" id="GO:0019877">
    <property type="term" value="P:diaminopimelate biosynthetic process"/>
    <property type="evidence" value="ECO:0007669"/>
    <property type="project" value="UniProtKB-UniRule"/>
</dbReference>
<dbReference type="GO" id="GO:0009089">
    <property type="term" value="P:lysine biosynthetic process via diaminopimelate"/>
    <property type="evidence" value="ECO:0007669"/>
    <property type="project" value="UniProtKB-UniRule"/>
</dbReference>
<dbReference type="CDD" id="cd00950">
    <property type="entry name" value="DHDPS"/>
    <property type="match status" value="1"/>
</dbReference>
<dbReference type="Gene3D" id="3.20.20.70">
    <property type="entry name" value="Aldolase class I"/>
    <property type="match status" value="1"/>
</dbReference>
<dbReference type="HAMAP" id="MF_00418">
    <property type="entry name" value="DapA"/>
    <property type="match status" value="1"/>
</dbReference>
<dbReference type="InterPro" id="IPR013785">
    <property type="entry name" value="Aldolase_TIM"/>
</dbReference>
<dbReference type="InterPro" id="IPR005263">
    <property type="entry name" value="DapA"/>
</dbReference>
<dbReference type="InterPro" id="IPR002220">
    <property type="entry name" value="DapA-like"/>
</dbReference>
<dbReference type="InterPro" id="IPR020625">
    <property type="entry name" value="Schiff_base-form_aldolases_AS"/>
</dbReference>
<dbReference type="InterPro" id="IPR020624">
    <property type="entry name" value="Schiff_base-form_aldolases_CS"/>
</dbReference>
<dbReference type="NCBIfam" id="TIGR00674">
    <property type="entry name" value="dapA"/>
    <property type="match status" value="1"/>
</dbReference>
<dbReference type="PANTHER" id="PTHR12128:SF66">
    <property type="entry name" value="4-HYDROXY-2-OXOGLUTARATE ALDOLASE, MITOCHONDRIAL"/>
    <property type="match status" value="1"/>
</dbReference>
<dbReference type="PANTHER" id="PTHR12128">
    <property type="entry name" value="DIHYDRODIPICOLINATE SYNTHASE"/>
    <property type="match status" value="1"/>
</dbReference>
<dbReference type="Pfam" id="PF00701">
    <property type="entry name" value="DHDPS"/>
    <property type="match status" value="1"/>
</dbReference>
<dbReference type="PIRSF" id="PIRSF001365">
    <property type="entry name" value="DHDPS"/>
    <property type="match status" value="1"/>
</dbReference>
<dbReference type="PRINTS" id="PR00146">
    <property type="entry name" value="DHPICSNTHASE"/>
</dbReference>
<dbReference type="SMART" id="SM01130">
    <property type="entry name" value="DHDPS"/>
    <property type="match status" value="1"/>
</dbReference>
<dbReference type="SUPFAM" id="SSF51569">
    <property type="entry name" value="Aldolase"/>
    <property type="match status" value="1"/>
</dbReference>
<dbReference type="PROSITE" id="PS00665">
    <property type="entry name" value="DHDPS_1"/>
    <property type="match status" value="1"/>
</dbReference>
<dbReference type="PROSITE" id="PS00666">
    <property type="entry name" value="DHDPS_2"/>
    <property type="match status" value="1"/>
</dbReference>
<evidence type="ECO:0000255" key="1">
    <source>
        <dbReference type="HAMAP-Rule" id="MF_00418"/>
    </source>
</evidence>
<evidence type="ECO:0000305" key="2"/>
<gene>
    <name evidence="1" type="primary">dapA</name>
    <name type="ordered locus">Noc_2524</name>
</gene>
<proteinExistence type="inferred from homology"/>
<protein>
    <recommendedName>
        <fullName evidence="1">4-hydroxy-tetrahydrodipicolinate synthase</fullName>
        <shortName evidence="1">HTPA synthase</shortName>
        <ecNumber evidence="1">4.3.3.7</ecNumber>
    </recommendedName>
</protein>
<name>DAPA_NITOC</name>
<comment type="function">
    <text evidence="1">Catalyzes the condensation of (S)-aspartate-beta-semialdehyde [(S)-ASA] and pyruvate to 4-hydroxy-tetrahydrodipicolinate (HTPA).</text>
</comment>
<comment type="catalytic activity">
    <reaction evidence="1">
        <text>L-aspartate 4-semialdehyde + pyruvate = (2S,4S)-4-hydroxy-2,3,4,5-tetrahydrodipicolinate + H2O + H(+)</text>
        <dbReference type="Rhea" id="RHEA:34171"/>
        <dbReference type="ChEBI" id="CHEBI:15361"/>
        <dbReference type="ChEBI" id="CHEBI:15377"/>
        <dbReference type="ChEBI" id="CHEBI:15378"/>
        <dbReference type="ChEBI" id="CHEBI:67139"/>
        <dbReference type="ChEBI" id="CHEBI:537519"/>
        <dbReference type="EC" id="4.3.3.7"/>
    </reaction>
</comment>
<comment type="pathway">
    <text evidence="1">Amino-acid biosynthesis; L-lysine biosynthesis via DAP pathway; (S)-tetrahydrodipicolinate from L-aspartate: step 3/4.</text>
</comment>
<comment type="subunit">
    <text evidence="1">Homotetramer; dimer of dimers.</text>
</comment>
<comment type="subcellular location">
    <subcellularLocation>
        <location evidence="1">Cytoplasm</location>
    </subcellularLocation>
</comment>
<comment type="similarity">
    <text evidence="1">Belongs to the DapA family.</text>
</comment>
<comment type="caution">
    <text evidence="2">Was originally thought to be a dihydrodipicolinate synthase (DHDPS), catalyzing the condensation of (S)-aspartate-beta-semialdehyde [(S)-ASA] and pyruvate to dihydrodipicolinate (DHDP). However, it was shown in E.coli that the product of the enzymatic reaction is not dihydrodipicolinate but in fact (4S)-4-hydroxy-2,3,4,5-tetrahydro-(2S)-dipicolinic acid (HTPA), and that the consecutive dehydration reaction leading to DHDP is not spontaneous but catalyzed by DapB.</text>
</comment>
<keyword id="KW-0028">Amino-acid biosynthesis</keyword>
<keyword id="KW-0963">Cytoplasm</keyword>
<keyword id="KW-0220">Diaminopimelate biosynthesis</keyword>
<keyword id="KW-0456">Lyase</keyword>
<keyword id="KW-0457">Lysine biosynthesis</keyword>
<keyword id="KW-1185">Reference proteome</keyword>
<keyword id="KW-0704">Schiff base</keyword>
<feature type="chain" id="PRO_1000050233" description="4-hydroxy-tetrahydrodipicolinate synthase">
    <location>
        <begin position="1"/>
        <end position="292"/>
    </location>
</feature>
<feature type="active site" description="Proton donor/acceptor" evidence="1">
    <location>
        <position position="133"/>
    </location>
</feature>
<feature type="active site" description="Schiff-base intermediate with substrate" evidence="1">
    <location>
        <position position="161"/>
    </location>
</feature>
<feature type="binding site" evidence="1">
    <location>
        <position position="45"/>
    </location>
    <ligand>
        <name>pyruvate</name>
        <dbReference type="ChEBI" id="CHEBI:15361"/>
    </ligand>
</feature>
<feature type="binding site" evidence="1">
    <location>
        <position position="203"/>
    </location>
    <ligand>
        <name>pyruvate</name>
        <dbReference type="ChEBI" id="CHEBI:15361"/>
    </ligand>
</feature>
<feature type="site" description="Part of a proton relay during catalysis" evidence="1">
    <location>
        <position position="44"/>
    </location>
</feature>
<feature type="site" description="Part of a proton relay during catalysis" evidence="1">
    <location>
        <position position="107"/>
    </location>
</feature>
<accession>Q3J869</accession>
<reference key="1">
    <citation type="journal article" date="2006" name="Appl. Environ. Microbiol.">
        <title>Complete genome sequence of the marine, chemolithoautotrophic, ammonia-oxidizing bacterium Nitrosococcus oceani ATCC 19707.</title>
        <authorList>
            <person name="Klotz M.G."/>
            <person name="Arp D.J."/>
            <person name="Chain P.S.G."/>
            <person name="El-Sheikh A.F."/>
            <person name="Hauser L.J."/>
            <person name="Hommes N.G."/>
            <person name="Larimer F.W."/>
            <person name="Malfatti S.A."/>
            <person name="Norton J.M."/>
            <person name="Poret-Peterson A.T."/>
            <person name="Vergez L.M."/>
            <person name="Ward B.B."/>
        </authorList>
    </citation>
    <scope>NUCLEOTIDE SEQUENCE [LARGE SCALE GENOMIC DNA]</scope>
    <source>
        <strain>ATCC 19707 / BCRC 17464 / JCM 30415 / NCIMB 11848 / C-107</strain>
    </source>
</reference>